<reference key="1">
    <citation type="journal article" date="2003" name="Nucleic Acids Res.">
        <title>Genome sequence of Chlamydophila caviae (Chlamydia psittaci GPIC): examining the role of niche-specific genes in the evolution of the Chlamydiaceae.</title>
        <authorList>
            <person name="Read T.D."/>
            <person name="Myers G.S.A."/>
            <person name="Brunham R.C."/>
            <person name="Nelson W.C."/>
            <person name="Paulsen I.T."/>
            <person name="Heidelberg J.F."/>
            <person name="Holtzapple E.K."/>
            <person name="Khouri H.M."/>
            <person name="Federova N.B."/>
            <person name="Carty H.A."/>
            <person name="Umayam L.A."/>
            <person name="Haft D.H."/>
            <person name="Peterson J.D."/>
            <person name="Beanan M.J."/>
            <person name="White O."/>
            <person name="Salzberg S.L."/>
            <person name="Hsia R.-C."/>
            <person name="McClarty G."/>
            <person name="Rank R.G."/>
            <person name="Bavoil P.M."/>
            <person name="Fraser C.M."/>
        </authorList>
    </citation>
    <scope>NUCLEOTIDE SEQUENCE [LARGE SCALE GENOMIC DNA]</scope>
    <source>
        <strain>ATCC VR-813 / DSM 19441 / 03DC25 / GPIC</strain>
    </source>
</reference>
<sequence>MIQQESQLKVADNTGAKKVKCFKVLGGSRRRYATVGDIIVCSVRDVEPDSSIKKGDVVKAVIVRTRRDILRKDGSSLRFDTNSCVIIDEKGNPKGTRIFGPIAREIRDRGFVKISSLAPEVI</sequence>
<gene>
    <name evidence="1" type="primary">rplN</name>
    <name type="ordered locus">CCA_00103</name>
</gene>
<protein>
    <recommendedName>
        <fullName evidence="1">Large ribosomal subunit protein uL14</fullName>
    </recommendedName>
    <alternativeName>
        <fullName evidence="2">50S ribosomal protein L14</fullName>
    </alternativeName>
</protein>
<dbReference type="EMBL" id="AE015925">
    <property type="protein sequence ID" value="AAP04855.1"/>
    <property type="molecule type" value="Genomic_DNA"/>
</dbReference>
<dbReference type="RefSeq" id="WP_011006076.1">
    <property type="nucleotide sequence ID" value="NC_003361.3"/>
</dbReference>
<dbReference type="SMR" id="Q824P1"/>
<dbReference type="STRING" id="227941.CCA_00103"/>
<dbReference type="KEGG" id="cca:CCA_00103"/>
<dbReference type="eggNOG" id="COG0093">
    <property type="taxonomic scope" value="Bacteria"/>
</dbReference>
<dbReference type="HOGENOM" id="CLU_095071_2_1_0"/>
<dbReference type="OrthoDB" id="9806379at2"/>
<dbReference type="Proteomes" id="UP000002193">
    <property type="component" value="Chromosome"/>
</dbReference>
<dbReference type="GO" id="GO:0022625">
    <property type="term" value="C:cytosolic large ribosomal subunit"/>
    <property type="evidence" value="ECO:0007669"/>
    <property type="project" value="TreeGrafter"/>
</dbReference>
<dbReference type="GO" id="GO:0070180">
    <property type="term" value="F:large ribosomal subunit rRNA binding"/>
    <property type="evidence" value="ECO:0007669"/>
    <property type="project" value="TreeGrafter"/>
</dbReference>
<dbReference type="GO" id="GO:0003735">
    <property type="term" value="F:structural constituent of ribosome"/>
    <property type="evidence" value="ECO:0007669"/>
    <property type="project" value="InterPro"/>
</dbReference>
<dbReference type="GO" id="GO:0006412">
    <property type="term" value="P:translation"/>
    <property type="evidence" value="ECO:0007669"/>
    <property type="project" value="UniProtKB-UniRule"/>
</dbReference>
<dbReference type="CDD" id="cd00337">
    <property type="entry name" value="Ribosomal_uL14"/>
    <property type="match status" value="1"/>
</dbReference>
<dbReference type="FunFam" id="2.40.150.20:FF:000001">
    <property type="entry name" value="50S ribosomal protein L14"/>
    <property type="match status" value="1"/>
</dbReference>
<dbReference type="Gene3D" id="2.40.150.20">
    <property type="entry name" value="Ribosomal protein L14"/>
    <property type="match status" value="1"/>
</dbReference>
<dbReference type="HAMAP" id="MF_01367">
    <property type="entry name" value="Ribosomal_uL14"/>
    <property type="match status" value="1"/>
</dbReference>
<dbReference type="InterPro" id="IPR000218">
    <property type="entry name" value="Ribosomal_uL14"/>
</dbReference>
<dbReference type="InterPro" id="IPR005745">
    <property type="entry name" value="Ribosomal_uL14_bac-type"/>
</dbReference>
<dbReference type="InterPro" id="IPR019972">
    <property type="entry name" value="Ribosomal_uL14_CS"/>
</dbReference>
<dbReference type="InterPro" id="IPR036853">
    <property type="entry name" value="Ribosomal_uL14_sf"/>
</dbReference>
<dbReference type="NCBIfam" id="TIGR01067">
    <property type="entry name" value="rplN_bact"/>
    <property type="match status" value="1"/>
</dbReference>
<dbReference type="PANTHER" id="PTHR11761">
    <property type="entry name" value="50S/60S RIBOSOMAL PROTEIN L14/L23"/>
    <property type="match status" value="1"/>
</dbReference>
<dbReference type="PANTHER" id="PTHR11761:SF3">
    <property type="entry name" value="LARGE RIBOSOMAL SUBUNIT PROTEIN UL14M"/>
    <property type="match status" value="1"/>
</dbReference>
<dbReference type="Pfam" id="PF00238">
    <property type="entry name" value="Ribosomal_L14"/>
    <property type="match status" value="1"/>
</dbReference>
<dbReference type="SMART" id="SM01374">
    <property type="entry name" value="Ribosomal_L14"/>
    <property type="match status" value="1"/>
</dbReference>
<dbReference type="SUPFAM" id="SSF50193">
    <property type="entry name" value="Ribosomal protein L14"/>
    <property type="match status" value="1"/>
</dbReference>
<dbReference type="PROSITE" id="PS00049">
    <property type="entry name" value="RIBOSOMAL_L14"/>
    <property type="match status" value="1"/>
</dbReference>
<evidence type="ECO:0000255" key="1">
    <source>
        <dbReference type="HAMAP-Rule" id="MF_01367"/>
    </source>
</evidence>
<evidence type="ECO:0000305" key="2"/>
<name>RL14_CHLCV</name>
<comment type="function">
    <text evidence="1">Binds to 23S rRNA. Forms part of two intersubunit bridges in the 70S ribosome.</text>
</comment>
<comment type="subunit">
    <text evidence="1">Part of the 50S ribosomal subunit. Forms a cluster with proteins L3 and L19. In the 70S ribosome, L14 and L19 interact and together make contacts with the 16S rRNA in bridges B5 and B8.</text>
</comment>
<comment type="similarity">
    <text evidence="1">Belongs to the universal ribosomal protein uL14 family.</text>
</comment>
<proteinExistence type="inferred from homology"/>
<keyword id="KW-0687">Ribonucleoprotein</keyword>
<keyword id="KW-0689">Ribosomal protein</keyword>
<keyword id="KW-0694">RNA-binding</keyword>
<keyword id="KW-0699">rRNA-binding</keyword>
<feature type="chain" id="PRO_1000055550" description="Large ribosomal subunit protein uL14">
    <location>
        <begin position="1"/>
        <end position="122"/>
    </location>
</feature>
<organism>
    <name type="scientific">Chlamydia caviae (strain ATCC VR-813 / DSM 19441 / 03DC25 / GPIC)</name>
    <name type="common">Chlamydophila caviae</name>
    <dbReference type="NCBI Taxonomy" id="227941"/>
    <lineage>
        <taxon>Bacteria</taxon>
        <taxon>Pseudomonadati</taxon>
        <taxon>Chlamydiota</taxon>
        <taxon>Chlamydiia</taxon>
        <taxon>Chlamydiales</taxon>
        <taxon>Chlamydiaceae</taxon>
        <taxon>Chlamydia/Chlamydophila group</taxon>
        <taxon>Chlamydia</taxon>
    </lineage>
</organism>
<accession>Q824P1</accession>